<protein>
    <recommendedName>
        <fullName evidence="1">tRNA-modifying protein YgfZ</fullName>
    </recommendedName>
</protein>
<organism>
    <name type="scientific">Vibrio campbellii (strain ATCC BAA-1116)</name>
    <dbReference type="NCBI Taxonomy" id="2902295"/>
    <lineage>
        <taxon>Bacteria</taxon>
        <taxon>Pseudomonadati</taxon>
        <taxon>Pseudomonadota</taxon>
        <taxon>Gammaproteobacteria</taxon>
        <taxon>Vibrionales</taxon>
        <taxon>Vibrionaceae</taxon>
        <taxon>Vibrio</taxon>
    </lineage>
</organism>
<comment type="function">
    <text evidence="1">Folate-binding protein involved in regulating the level of ATP-DnaA and in the modification of some tRNAs. It is probably a key factor in regulatory networks that act via tRNA modification, such as initiation of chromosomal replication.</text>
</comment>
<comment type="subcellular location">
    <subcellularLocation>
        <location evidence="1">Cytoplasm</location>
    </subcellularLocation>
</comment>
<comment type="similarity">
    <text evidence="1">Belongs to the tRNA-modifying YgfZ family.</text>
</comment>
<keyword id="KW-0963">Cytoplasm</keyword>
<keyword id="KW-0290">Folate-binding</keyword>
<keyword id="KW-0819">tRNA processing</keyword>
<evidence type="ECO:0000255" key="1">
    <source>
        <dbReference type="HAMAP-Rule" id="MF_01175"/>
    </source>
</evidence>
<proteinExistence type="inferred from homology"/>
<accession>A7MTS4</accession>
<reference key="1">
    <citation type="submission" date="2007-08" db="EMBL/GenBank/DDBJ databases">
        <authorList>
            <consortium name="The Vibrio harveyi Genome Sequencing Project"/>
            <person name="Bassler B."/>
            <person name="Clifton S.W."/>
            <person name="Fulton L."/>
            <person name="Delehaunty K."/>
            <person name="Fronick C."/>
            <person name="Harrison M."/>
            <person name="Markivic C."/>
            <person name="Fulton R."/>
            <person name="Tin-Wollam A.-M."/>
            <person name="Shah N."/>
            <person name="Pepin K."/>
            <person name="Nash W."/>
            <person name="Thiruvilangam P."/>
            <person name="Bhonagiri V."/>
            <person name="Waters C."/>
            <person name="Tu K.C."/>
            <person name="Irgon J."/>
            <person name="Wilson R.K."/>
        </authorList>
    </citation>
    <scope>NUCLEOTIDE SEQUENCE [LARGE SCALE GENOMIC DNA]</scope>
    <source>
        <strain>ATCC BAA-1116 / BB120</strain>
    </source>
</reference>
<sequence length="322" mass="35288">MEWQTRFSPLNLSTQDALPELSISLLDNLGMITMVGDDKKSYLHGQVTCDVVSLEKDQSMLGAHCDAKGKVWSVFRLFHHNDGYAMVQPKSAIEVELKEIKKYAVFSKVTIEESSDIVLGVAGENADAFISTLNADSGEVRTVEGGTAVKVASNRWLLALTAEAAQSLLEDSQATLTTHELWTRFDIEAALPYVAADAQNEHIPQALNVQALGGISFTKGCYTGQETVARAKYRGTNKRAMYIVKGATAEALGEGAIELERSVGENWRSVGALLTHYQFSDNQAMGLIVLPNNLDDDTRLRLVTQPECEWEIAALPYSLDDE</sequence>
<dbReference type="EMBL" id="CP000789">
    <property type="protein sequence ID" value="ABU72482.1"/>
    <property type="molecule type" value="Genomic_DNA"/>
</dbReference>
<dbReference type="RefSeq" id="WP_012128925.1">
    <property type="nucleotide sequence ID" value="NC_009783.1"/>
</dbReference>
<dbReference type="SMR" id="A7MTS4"/>
<dbReference type="KEGG" id="vha:VIBHAR_03546"/>
<dbReference type="PATRIC" id="fig|338187.25.peg.2664"/>
<dbReference type="Proteomes" id="UP000008152">
    <property type="component" value="Chromosome I"/>
</dbReference>
<dbReference type="GO" id="GO:0005737">
    <property type="term" value="C:cytoplasm"/>
    <property type="evidence" value="ECO:0007669"/>
    <property type="project" value="UniProtKB-SubCell"/>
</dbReference>
<dbReference type="GO" id="GO:0005542">
    <property type="term" value="F:folic acid binding"/>
    <property type="evidence" value="ECO:0007669"/>
    <property type="project" value="UniProtKB-UniRule"/>
</dbReference>
<dbReference type="GO" id="GO:0016226">
    <property type="term" value="P:iron-sulfur cluster assembly"/>
    <property type="evidence" value="ECO:0007669"/>
    <property type="project" value="TreeGrafter"/>
</dbReference>
<dbReference type="GO" id="GO:0009451">
    <property type="term" value="P:RNA modification"/>
    <property type="evidence" value="ECO:0007669"/>
    <property type="project" value="InterPro"/>
</dbReference>
<dbReference type="GO" id="GO:0008033">
    <property type="term" value="P:tRNA processing"/>
    <property type="evidence" value="ECO:0007669"/>
    <property type="project" value="UniProtKB-UniRule"/>
</dbReference>
<dbReference type="FunFam" id="3.30.70.1400:FF:000002">
    <property type="entry name" value="tRNA-modifying protein YgfZ"/>
    <property type="match status" value="1"/>
</dbReference>
<dbReference type="Gene3D" id="2.40.30.160">
    <property type="match status" value="1"/>
</dbReference>
<dbReference type="Gene3D" id="3.30.70.1630">
    <property type="match status" value="1"/>
</dbReference>
<dbReference type="Gene3D" id="3.30.70.1400">
    <property type="entry name" value="Aminomethyltransferase beta-barrel domains"/>
    <property type="match status" value="1"/>
</dbReference>
<dbReference type="HAMAP" id="MF_01175">
    <property type="entry name" value="tRNA_modifying_YgfZ"/>
    <property type="match status" value="1"/>
</dbReference>
<dbReference type="InterPro" id="IPR029043">
    <property type="entry name" value="GcvT/YgfZ_C"/>
</dbReference>
<dbReference type="InterPro" id="IPR023758">
    <property type="entry name" value="tRNA-modifying_YgfZ"/>
</dbReference>
<dbReference type="InterPro" id="IPR045179">
    <property type="entry name" value="YgfZ/GcvT"/>
</dbReference>
<dbReference type="InterPro" id="IPR017703">
    <property type="entry name" value="YgfZ/GcvT_CS"/>
</dbReference>
<dbReference type="InterPro" id="IPR048451">
    <property type="entry name" value="YgfZ_barrel"/>
</dbReference>
<dbReference type="NCBIfam" id="NF007110">
    <property type="entry name" value="PRK09559.1"/>
    <property type="match status" value="1"/>
</dbReference>
<dbReference type="NCBIfam" id="TIGR03317">
    <property type="entry name" value="ygfZ_signature"/>
    <property type="match status" value="1"/>
</dbReference>
<dbReference type="PANTHER" id="PTHR22602">
    <property type="entry name" value="TRANSFERASE CAF17, MITOCHONDRIAL-RELATED"/>
    <property type="match status" value="1"/>
</dbReference>
<dbReference type="PANTHER" id="PTHR22602:SF0">
    <property type="entry name" value="TRANSFERASE CAF17, MITOCHONDRIAL-RELATED"/>
    <property type="match status" value="1"/>
</dbReference>
<dbReference type="Pfam" id="PF21130">
    <property type="entry name" value="YgfZ_barrel"/>
    <property type="match status" value="1"/>
</dbReference>
<dbReference type="SUPFAM" id="SSF101790">
    <property type="entry name" value="Aminomethyltransferase beta-barrel domain"/>
    <property type="match status" value="1"/>
</dbReference>
<dbReference type="SUPFAM" id="SSF103025">
    <property type="entry name" value="Folate-binding domain"/>
    <property type="match status" value="1"/>
</dbReference>
<feature type="chain" id="PRO_1000065779" description="tRNA-modifying protein YgfZ">
    <location>
        <begin position="1"/>
        <end position="322"/>
    </location>
</feature>
<feature type="binding site" evidence="1">
    <location>
        <position position="182"/>
    </location>
    <ligand>
        <name>folate</name>
        <dbReference type="ChEBI" id="CHEBI:62501"/>
    </ligand>
</feature>
<gene>
    <name type="ordered locus">VIBHAR_03546</name>
</gene>
<name>YGFZ_VIBC1</name>